<keyword id="KW-0001">2Fe-2S</keyword>
<keyword id="KW-0249">Electron transport</keyword>
<keyword id="KW-0408">Iron</keyword>
<keyword id="KW-0411">Iron-sulfur</keyword>
<keyword id="KW-0479">Metal-binding</keyword>
<keyword id="KW-0535">Nitrogen fixation</keyword>
<keyword id="KW-0813">Transport</keyword>
<evidence type="ECO:0000250" key="1"/>
<evidence type="ECO:0000255" key="2">
    <source>
        <dbReference type="PROSITE-ProRule" id="PRU00465"/>
    </source>
</evidence>
<evidence type="ECO:0000305" key="3"/>
<reference key="1">
    <citation type="journal article" date="1994" name="J. Bacteriol.">
        <title>Characterization of the genome region encoding an fdxH-type ferredoxin and a new 2[4Fe-4S] ferredoxin from the nonheterocystous, nitrogen-fixing cyanobacterium Plectonema boryanum PCC 73110.</title>
        <authorList>
            <person name="Schrautemeier B."/>
            <person name="Cassing A."/>
            <person name="Boehme H."/>
        </authorList>
    </citation>
    <scope>NUCLEOTIDE SEQUENCE [GENOMIC DNA]</scope>
    <source>
        <strain>ATCC 18200 / UTEX 594 / PCC 73110</strain>
    </source>
</reference>
<proteinExistence type="inferred from homology"/>
<gene>
    <name type="primary">fdxH</name>
</gene>
<organism>
    <name type="scientific">Leptolyngbya boryana</name>
    <name type="common">Plectonema boryanum</name>
    <dbReference type="NCBI Taxonomy" id="1184"/>
    <lineage>
        <taxon>Bacteria</taxon>
        <taxon>Bacillati</taxon>
        <taxon>Cyanobacteriota</taxon>
        <taxon>Cyanophyceae</taxon>
        <taxon>Leptolyngbyales</taxon>
        <taxon>Leptolyngbyaceae</taxon>
        <taxon>Leptolyngbya group</taxon>
        <taxon>Leptolyngbya</taxon>
    </lineage>
</organism>
<accession>P46035</accession>
<comment type="function">
    <text>Ferredoxins are iron-sulfur proteins that transfer electrons in a wide variety of metabolic reactions. Donates electrons to the nitrogenase.</text>
</comment>
<comment type="cofactor">
    <cofactor>
        <name>[2Fe-2S] cluster</name>
        <dbReference type="ChEBI" id="CHEBI:190135"/>
    </cofactor>
    <text>Binds 1 [2Fe-2S] cluster.</text>
</comment>
<comment type="similarity">
    <text evidence="3">Belongs to the 2Fe2S plant-type ferredoxin family.</text>
</comment>
<feature type="initiator methionine" description="Removed" evidence="1">
    <location>
        <position position="1"/>
    </location>
</feature>
<feature type="chain" id="PRO_0000189353" description="Ferredoxin-2">
    <location>
        <begin position="2"/>
        <end position="99"/>
    </location>
</feature>
<feature type="domain" description="2Fe-2S ferredoxin-type" evidence="2">
    <location>
        <begin position="4"/>
        <end position="96"/>
    </location>
</feature>
<feature type="binding site" evidence="2">
    <location>
        <position position="42"/>
    </location>
    <ligand>
        <name>[2Fe-2S] cluster</name>
        <dbReference type="ChEBI" id="CHEBI:190135"/>
    </ligand>
</feature>
<feature type="binding site" evidence="2">
    <location>
        <position position="47"/>
    </location>
    <ligand>
        <name>[2Fe-2S] cluster</name>
        <dbReference type="ChEBI" id="CHEBI:190135"/>
    </ligand>
</feature>
<feature type="binding site" evidence="2">
    <location>
        <position position="50"/>
    </location>
    <ligand>
        <name>[2Fe-2S] cluster</name>
        <dbReference type="ChEBI" id="CHEBI:190135"/>
    </ligand>
</feature>
<feature type="binding site" evidence="2">
    <location>
        <position position="80"/>
    </location>
    <ligand>
        <name>[2Fe-2S] cluster</name>
        <dbReference type="ChEBI" id="CHEBI:190135"/>
    </ligand>
</feature>
<name>FER2_LEPBY</name>
<dbReference type="EMBL" id="X71865">
    <property type="protein sequence ID" value="CAA50698.1"/>
    <property type="molecule type" value="Genomic_DNA"/>
</dbReference>
<dbReference type="PIR" id="C49890">
    <property type="entry name" value="C49890"/>
</dbReference>
<dbReference type="SMR" id="P46035"/>
<dbReference type="GO" id="GO:0051537">
    <property type="term" value="F:2 iron, 2 sulfur cluster binding"/>
    <property type="evidence" value="ECO:0007669"/>
    <property type="project" value="UniProtKB-KW"/>
</dbReference>
<dbReference type="GO" id="GO:0009055">
    <property type="term" value="F:electron transfer activity"/>
    <property type="evidence" value="ECO:0007669"/>
    <property type="project" value="InterPro"/>
</dbReference>
<dbReference type="GO" id="GO:0046872">
    <property type="term" value="F:metal ion binding"/>
    <property type="evidence" value="ECO:0007669"/>
    <property type="project" value="UniProtKB-KW"/>
</dbReference>
<dbReference type="GO" id="GO:0022900">
    <property type="term" value="P:electron transport chain"/>
    <property type="evidence" value="ECO:0007669"/>
    <property type="project" value="InterPro"/>
</dbReference>
<dbReference type="GO" id="GO:0009399">
    <property type="term" value="P:nitrogen fixation"/>
    <property type="evidence" value="ECO:0007669"/>
    <property type="project" value="UniProtKB-KW"/>
</dbReference>
<dbReference type="CDD" id="cd00207">
    <property type="entry name" value="fer2"/>
    <property type="match status" value="1"/>
</dbReference>
<dbReference type="Gene3D" id="3.10.20.30">
    <property type="match status" value="1"/>
</dbReference>
<dbReference type="InterPro" id="IPR036010">
    <property type="entry name" value="2Fe-2S_ferredoxin-like_sf"/>
</dbReference>
<dbReference type="InterPro" id="IPR001041">
    <property type="entry name" value="2Fe-2S_ferredoxin-type"/>
</dbReference>
<dbReference type="InterPro" id="IPR006058">
    <property type="entry name" value="2Fe2S_fd_BS"/>
</dbReference>
<dbReference type="InterPro" id="IPR012675">
    <property type="entry name" value="Beta-grasp_dom_sf"/>
</dbReference>
<dbReference type="InterPro" id="IPR010241">
    <property type="entry name" value="Fd_pln"/>
</dbReference>
<dbReference type="NCBIfam" id="TIGR02008">
    <property type="entry name" value="fdx_plant"/>
    <property type="match status" value="1"/>
</dbReference>
<dbReference type="PANTHER" id="PTHR43112">
    <property type="entry name" value="FERREDOXIN"/>
    <property type="match status" value="1"/>
</dbReference>
<dbReference type="PANTHER" id="PTHR43112:SF3">
    <property type="entry name" value="FERREDOXIN-2, CHLOROPLASTIC"/>
    <property type="match status" value="1"/>
</dbReference>
<dbReference type="Pfam" id="PF00111">
    <property type="entry name" value="Fer2"/>
    <property type="match status" value="1"/>
</dbReference>
<dbReference type="SUPFAM" id="SSF54292">
    <property type="entry name" value="2Fe-2S ferredoxin-like"/>
    <property type="match status" value="1"/>
</dbReference>
<dbReference type="PROSITE" id="PS00197">
    <property type="entry name" value="2FE2S_FER_1"/>
    <property type="match status" value="1"/>
</dbReference>
<dbReference type="PROSITE" id="PS51085">
    <property type="entry name" value="2FE2S_FER_2"/>
    <property type="match status" value="1"/>
</dbReference>
<sequence>MATYQVRLINKKRNLDITLPVDEDTTVLEAAEEAELDLPFSCHSGACSSCVGKVVEGEINQDDQTFLDEEQVAKGFVLLCVTYPRTDCTIRTHQEAYLV</sequence>
<protein>
    <recommendedName>
        <fullName>Ferredoxin-2</fullName>
    </recommendedName>
    <alternativeName>
        <fullName>Ferredoxin II</fullName>
        <shortName>FdII</shortName>
    </alternativeName>
</protein>